<protein>
    <recommendedName>
        <fullName>Glyoxalase domain-containing protein 5</fullName>
    </recommendedName>
</protein>
<sequence>MFPLCRLLACRAQVPSHLVRYLSDSQPPFCIQRLDHLVLTVRSLDRTINFYTKVLGMEATTFKGGRKALSFGMQKINLHEAGKEFEPKASVPSPGSADLCLITETPLSTVVQHLKACGVPVEEGPVSRTGAVGEIISVYMRDPDQNLIEVSNYESDIKKK</sequence>
<evidence type="ECO:0000255" key="1">
    <source>
        <dbReference type="PROSITE-ProRule" id="PRU01163"/>
    </source>
</evidence>
<evidence type="ECO:0000305" key="2"/>
<gene>
    <name type="primary">glod5</name>
    <name type="ORF">TEgg080h18.1</name>
</gene>
<feature type="chain" id="PRO_0000305330" description="Glyoxalase domain-containing protein 5">
    <location>
        <begin position="1"/>
        <end position="160"/>
    </location>
</feature>
<feature type="domain" description="VOC" evidence="1">
    <location>
        <begin position="33"/>
        <end position="153"/>
    </location>
</feature>
<feature type="sequence conflict" description="In Ref. 2; AAI35159." evidence="2" ref="2">
    <original>S</original>
    <variation>N</variation>
    <location>
        <position position="43"/>
    </location>
</feature>
<comment type="similarity">
    <text evidence="2">Belongs to the glyoxalase I family.</text>
</comment>
<name>GLOD5_XENTR</name>
<organism>
    <name type="scientific">Xenopus tropicalis</name>
    <name type="common">Western clawed frog</name>
    <name type="synonym">Silurana tropicalis</name>
    <dbReference type="NCBI Taxonomy" id="8364"/>
    <lineage>
        <taxon>Eukaryota</taxon>
        <taxon>Metazoa</taxon>
        <taxon>Chordata</taxon>
        <taxon>Craniata</taxon>
        <taxon>Vertebrata</taxon>
        <taxon>Euteleostomi</taxon>
        <taxon>Amphibia</taxon>
        <taxon>Batrachia</taxon>
        <taxon>Anura</taxon>
        <taxon>Pipoidea</taxon>
        <taxon>Pipidae</taxon>
        <taxon>Xenopodinae</taxon>
        <taxon>Xenopus</taxon>
        <taxon>Silurana</taxon>
    </lineage>
</organism>
<reference key="1">
    <citation type="submission" date="2006-10" db="EMBL/GenBank/DDBJ databases">
        <authorList>
            <consortium name="Sanger Xenopus tropicalis EST/cDNA project"/>
        </authorList>
    </citation>
    <scope>NUCLEOTIDE SEQUENCE [LARGE SCALE MRNA]</scope>
    <source>
        <tissue>Egg</tissue>
    </source>
</reference>
<reference key="2">
    <citation type="submission" date="2007-03" db="EMBL/GenBank/DDBJ databases">
        <authorList>
            <consortium name="NIH - Xenopus Gene Collection (XGC) project"/>
        </authorList>
    </citation>
    <scope>NUCLEOTIDE SEQUENCE [LARGE SCALE MRNA]</scope>
    <source>
        <tissue>Embryo</tissue>
    </source>
</reference>
<accession>Q28CR0</accession>
<accession>A4QN98</accession>
<proteinExistence type="evidence at transcript level"/>
<keyword id="KW-1185">Reference proteome</keyword>
<dbReference type="EMBL" id="CR926243">
    <property type="protein sequence ID" value="CAJ81418.1"/>
    <property type="molecule type" value="mRNA"/>
</dbReference>
<dbReference type="EMBL" id="BC135158">
    <property type="protein sequence ID" value="AAI35159.1"/>
    <property type="molecule type" value="mRNA"/>
</dbReference>
<dbReference type="RefSeq" id="NP_001039083.1">
    <property type="nucleotide sequence ID" value="NM_001045618.1"/>
</dbReference>
<dbReference type="SMR" id="Q28CR0"/>
<dbReference type="FunCoup" id="Q28CR0">
    <property type="interactions" value="21"/>
</dbReference>
<dbReference type="PaxDb" id="8364-ENSXETP00000025769"/>
<dbReference type="DNASU" id="733888"/>
<dbReference type="GeneID" id="733888"/>
<dbReference type="KEGG" id="xtr:733888"/>
<dbReference type="AGR" id="Xenbase:XB-GENE-5881447"/>
<dbReference type="CTD" id="392465"/>
<dbReference type="Xenbase" id="XB-GENE-5881447">
    <property type="gene designation" value="glod5"/>
</dbReference>
<dbReference type="eggNOG" id="ENOG502RZMP">
    <property type="taxonomic scope" value="Eukaryota"/>
</dbReference>
<dbReference type="InParanoid" id="Q28CR0"/>
<dbReference type="OMA" id="FGTHKIN"/>
<dbReference type="OrthoDB" id="5371818at2759"/>
<dbReference type="Proteomes" id="UP000008143">
    <property type="component" value="Chromosome 1"/>
</dbReference>
<dbReference type="Bgee" id="ENSXETG00000039015">
    <property type="expression patterns" value="Expressed in liver and 12 other cell types or tissues"/>
</dbReference>
<dbReference type="CDD" id="cd07253">
    <property type="entry name" value="GLOD5"/>
    <property type="match status" value="1"/>
</dbReference>
<dbReference type="Gene3D" id="3.10.180.10">
    <property type="entry name" value="2,3-Dihydroxybiphenyl 1,2-Dioxygenase, domain 1"/>
    <property type="match status" value="1"/>
</dbReference>
<dbReference type="InterPro" id="IPR029068">
    <property type="entry name" value="Glyas_Bleomycin-R_OHBP_Dase"/>
</dbReference>
<dbReference type="InterPro" id="IPR004360">
    <property type="entry name" value="Glyas_Fos-R_dOase_dom"/>
</dbReference>
<dbReference type="InterPro" id="IPR050383">
    <property type="entry name" value="GlyoxalaseI/FosfomycinResist"/>
</dbReference>
<dbReference type="InterPro" id="IPR037523">
    <property type="entry name" value="VOC"/>
</dbReference>
<dbReference type="PANTHER" id="PTHR21366:SF14">
    <property type="entry name" value="GLYOXALASE DOMAIN-CONTAINING PROTEIN 5"/>
    <property type="match status" value="1"/>
</dbReference>
<dbReference type="PANTHER" id="PTHR21366">
    <property type="entry name" value="GLYOXALASE FAMILY PROTEIN"/>
    <property type="match status" value="1"/>
</dbReference>
<dbReference type="Pfam" id="PF00903">
    <property type="entry name" value="Glyoxalase"/>
    <property type="match status" value="1"/>
</dbReference>
<dbReference type="SUPFAM" id="SSF54593">
    <property type="entry name" value="Glyoxalase/Bleomycin resistance protein/Dihydroxybiphenyl dioxygenase"/>
    <property type="match status" value="1"/>
</dbReference>
<dbReference type="PROSITE" id="PS51819">
    <property type="entry name" value="VOC"/>
    <property type="match status" value="1"/>
</dbReference>